<dbReference type="EC" id="1.17.1.8" evidence="1"/>
<dbReference type="EMBL" id="CP000517">
    <property type="protein sequence ID" value="ABX27022.1"/>
    <property type="molecule type" value="Genomic_DNA"/>
</dbReference>
<dbReference type="SMR" id="A8YUT4"/>
<dbReference type="KEGG" id="lhe:lhv_0909"/>
<dbReference type="eggNOG" id="COG0289">
    <property type="taxonomic scope" value="Bacteria"/>
</dbReference>
<dbReference type="HOGENOM" id="CLU_047479_0_1_9"/>
<dbReference type="UniPathway" id="UPA00034">
    <property type="reaction ID" value="UER00018"/>
</dbReference>
<dbReference type="Proteomes" id="UP000000790">
    <property type="component" value="Chromosome"/>
</dbReference>
<dbReference type="GO" id="GO:0005829">
    <property type="term" value="C:cytosol"/>
    <property type="evidence" value="ECO:0007669"/>
    <property type="project" value="TreeGrafter"/>
</dbReference>
<dbReference type="GO" id="GO:0008839">
    <property type="term" value="F:4-hydroxy-tetrahydrodipicolinate reductase"/>
    <property type="evidence" value="ECO:0007669"/>
    <property type="project" value="UniProtKB-EC"/>
</dbReference>
<dbReference type="GO" id="GO:0051287">
    <property type="term" value="F:NAD binding"/>
    <property type="evidence" value="ECO:0007669"/>
    <property type="project" value="UniProtKB-UniRule"/>
</dbReference>
<dbReference type="GO" id="GO:0050661">
    <property type="term" value="F:NADP binding"/>
    <property type="evidence" value="ECO:0007669"/>
    <property type="project" value="UniProtKB-UniRule"/>
</dbReference>
<dbReference type="GO" id="GO:0016726">
    <property type="term" value="F:oxidoreductase activity, acting on CH or CH2 groups, NAD or NADP as acceptor"/>
    <property type="evidence" value="ECO:0007669"/>
    <property type="project" value="UniProtKB-UniRule"/>
</dbReference>
<dbReference type="GO" id="GO:0019877">
    <property type="term" value="P:diaminopimelate biosynthetic process"/>
    <property type="evidence" value="ECO:0007669"/>
    <property type="project" value="UniProtKB-UniRule"/>
</dbReference>
<dbReference type="GO" id="GO:0009089">
    <property type="term" value="P:lysine biosynthetic process via diaminopimelate"/>
    <property type="evidence" value="ECO:0007669"/>
    <property type="project" value="UniProtKB-UniRule"/>
</dbReference>
<dbReference type="CDD" id="cd02274">
    <property type="entry name" value="DHDPR_N"/>
    <property type="match status" value="1"/>
</dbReference>
<dbReference type="FunFam" id="3.30.360.10:FF:000009">
    <property type="entry name" value="4-hydroxy-tetrahydrodipicolinate reductase"/>
    <property type="match status" value="1"/>
</dbReference>
<dbReference type="Gene3D" id="3.30.360.10">
    <property type="entry name" value="Dihydrodipicolinate Reductase, domain 2"/>
    <property type="match status" value="1"/>
</dbReference>
<dbReference type="Gene3D" id="3.40.50.720">
    <property type="entry name" value="NAD(P)-binding Rossmann-like Domain"/>
    <property type="match status" value="1"/>
</dbReference>
<dbReference type="HAMAP" id="MF_00102">
    <property type="entry name" value="DapB"/>
    <property type="match status" value="1"/>
</dbReference>
<dbReference type="InterPro" id="IPR022663">
    <property type="entry name" value="DapB_C"/>
</dbReference>
<dbReference type="InterPro" id="IPR000846">
    <property type="entry name" value="DapB_N"/>
</dbReference>
<dbReference type="InterPro" id="IPR022664">
    <property type="entry name" value="DapB_N_CS"/>
</dbReference>
<dbReference type="InterPro" id="IPR023940">
    <property type="entry name" value="DHDPR_bac"/>
</dbReference>
<dbReference type="InterPro" id="IPR036291">
    <property type="entry name" value="NAD(P)-bd_dom_sf"/>
</dbReference>
<dbReference type="NCBIfam" id="TIGR00036">
    <property type="entry name" value="dapB"/>
    <property type="match status" value="1"/>
</dbReference>
<dbReference type="PANTHER" id="PTHR20836:SF0">
    <property type="entry name" value="4-HYDROXY-TETRAHYDRODIPICOLINATE REDUCTASE 1, CHLOROPLASTIC-RELATED"/>
    <property type="match status" value="1"/>
</dbReference>
<dbReference type="PANTHER" id="PTHR20836">
    <property type="entry name" value="DIHYDRODIPICOLINATE REDUCTASE"/>
    <property type="match status" value="1"/>
</dbReference>
<dbReference type="Pfam" id="PF05173">
    <property type="entry name" value="DapB_C"/>
    <property type="match status" value="1"/>
</dbReference>
<dbReference type="Pfam" id="PF01113">
    <property type="entry name" value="DapB_N"/>
    <property type="match status" value="1"/>
</dbReference>
<dbReference type="PIRSF" id="PIRSF000161">
    <property type="entry name" value="DHPR"/>
    <property type="match status" value="1"/>
</dbReference>
<dbReference type="SUPFAM" id="SSF55347">
    <property type="entry name" value="Glyceraldehyde-3-phosphate dehydrogenase-like, C-terminal domain"/>
    <property type="match status" value="1"/>
</dbReference>
<dbReference type="SUPFAM" id="SSF51735">
    <property type="entry name" value="NAD(P)-binding Rossmann-fold domains"/>
    <property type="match status" value="1"/>
</dbReference>
<dbReference type="PROSITE" id="PS01298">
    <property type="entry name" value="DAPB"/>
    <property type="match status" value="1"/>
</dbReference>
<name>DAPB_LACH4</name>
<protein>
    <recommendedName>
        <fullName evidence="1">4-hydroxy-tetrahydrodipicolinate reductase</fullName>
        <shortName evidence="1">HTPA reductase</shortName>
        <ecNumber evidence="1">1.17.1.8</ecNumber>
    </recommendedName>
</protein>
<accession>A8YUT4</accession>
<organism>
    <name type="scientific">Lactobacillus helveticus (strain DPC 4571)</name>
    <dbReference type="NCBI Taxonomy" id="405566"/>
    <lineage>
        <taxon>Bacteria</taxon>
        <taxon>Bacillati</taxon>
        <taxon>Bacillota</taxon>
        <taxon>Bacilli</taxon>
        <taxon>Lactobacillales</taxon>
        <taxon>Lactobacillaceae</taxon>
        <taxon>Lactobacillus</taxon>
    </lineage>
</organism>
<comment type="function">
    <text evidence="1">Catalyzes the conversion of 4-hydroxy-tetrahydrodipicolinate (HTPA) to tetrahydrodipicolinate.</text>
</comment>
<comment type="catalytic activity">
    <reaction evidence="1">
        <text>(S)-2,3,4,5-tetrahydrodipicolinate + NAD(+) + H2O = (2S,4S)-4-hydroxy-2,3,4,5-tetrahydrodipicolinate + NADH + H(+)</text>
        <dbReference type="Rhea" id="RHEA:35323"/>
        <dbReference type="ChEBI" id="CHEBI:15377"/>
        <dbReference type="ChEBI" id="CHEBI:15378"/>
        <dbReference type="ChEBI" id="CHEBI:16845"/>
        <dbReference type="ChEBI" id="CHEBI:57540"/>
        <dbReference type="ChEBI" id="CHEBI:57945"/>
        <dbReference type="ChEBI" id="CHEBI:67139"/>
        <dbReference type="EC" id="1.17.1.8"/>
    </reaction>
</comment>
<comment type="catalytic activity">
    <reaction evidence="1">
        <text>(S)-2,3,4,5-tetrahydrodipicolinate + NADP(+) + H2O = (2S,4S)-4-hydroxy-2,3,4,5-tetrahydrodipicolinate + NADPH + H(+)</text>
        <dbReference type="Rhea" id="RHEA:35331"/>
        <dbReference type="ChEBI" id="CHEBI:15377"/>
        <dbReference type="ChEBI" id="CHEBI:15378"/>
        <dbReference type="ChEBI" id="CHEBI:16845"/>
        <dbReference type="ChEBI" id="CHEBI:57783"/>
        <dbReference type="ChEBI" id="CHEBI:58349"/>
        <dbReference type="ChEBI" id="CHEBI:67139"/>
        <dbReference type="EC" id="1.17.1.8"/>
    </reaction>
</comment>
<comment type="pathway">
    <text evidence="1">Amino-acid biosynthesis; L-lysine biosynthesis via DAP pathway; (S)-tetrahydrodipicolinate from L-aspartate: step 4/4.</text>
</comment>
<comment type="subcellular location">
    <subcellularLocation>
        <location evidence="1">Cytoplasm</location>
    </subcellularLocation>
</comment>
<comment type="similarity">
    <text evidence="1">Belongs to the DapB family.</text>
</comment>
<comment type="caution">
    <text evidence="2">Was originally thought to be a dihydrodipicolinate reductase (DHDPR), catalyzing the conversion of dihydrodipicolinate to tetrahydrodipicolinate. However, it was shown in E.coli that the substrate of the enzymatic reaction is not dihydrodipicolinate (DHDP) but in fact (2S,4S)-4-hydroxy-2,3,4,5-tetrahydrodipicolinic acid (HTPA), the product released by the DapA-catalyzed reaction.</text>
</comment>
<reference key="1">
    <citation type="journal article" date="2008" name="J. Bacteriol.">
        <title>Genome sequence of Lactobacillus helveticus: an organism distinguished by selective gene loss and IS element expansion.</title>
        <authorList>
            <person name="Callanan M."/>
            <person name="Kaleta P."/>
            <person name="O'Callaghan J."/>
            <person name="O'Sullivan O."/>
            <person name="Jordan K."/>
            <person name="McAuliffe O."/>
            <person name="Sangrador-Vegas A."/>
            <person name="Slattery L."/>
            <person name="Fitzgerald G.F."/>
            <person name="Beresford T."/>
            <person name="Ross R.P."/>
        </authorList>
    </citation>
    <scope>NUCLEOTIDE SEQUENCE [LARGE SCALE GENOMIC DNA]</scope>
    <source>
        <strain>DPC 4571</strain>
    </source>
</reference>
<evidence type="ECO:0000255" key="1">
    <source>
        <dbReference type="HAMAP-Rule" id="MF_00102"/>
    </source>
</evidence>
<evidence type="ECO:0000305" key="2"/>
<proteinExistence type="inferred from homology"/>
<feature type="chain" id="PRO_1000071303" description="4-hydroxy-tetrahydrodipicolinate reductase">
    <location>
        <begin position="1"/>
        <end position="261"/>
    </location>
</feature>
<feature type="active site" description="Proton donor/acceptor" evidence="1">
    <location>
        <position position="152"/>
    </location>
</feature>
<feature type="active site" description="Proton donor" evidence="1">
    <location>
        <position position="156"/>
    </location>
</feature>
<feature type="binding site" evidence="1">
    <location>
        <begin position="11"/>
        <end position="16"/>
    </location>
    <ligand>
        <name>NAD(+)</name>
        <dbReference type="ChEBI" id="CHEBI:57540"/>
    </ligand>
</feature>
<feature type="binding site" evidence="1">
    <location>
        <begin position="96"/>
        <end position="98"/>
    </location>
    <ligand>
        <name>NAD(+)</name>
        <dbReference type="ChEBI" id="CHEBI:57540"/>
    </ligand>
</feature>
<feature type="binding site" evidence="1">
    <location>
        <begin position="122"/>
        <end position="125"/>
    </location>
    <ligand>
        <name>NAD(+)</name>
        <dbReference type="ChEBI" id="CHEBI:57540"/>
    </ligand>
</feature>
<feature type="binding site" evidence="1">
    <location>
        <position position="153"/>
    </location>
    <ligand>
        <name>(S)-2,3,4,5-tetrahydrodipicolinate</name>
        <dbReference type="ChEBI" id="CHEBI:16845"/>
    </ligand>
</feature>
<feature type="binding site" evidence="1">
    <location>
        <begin position="162"/>
        <end position="163"/>
    </location>
    <ligand>
        <name>(S)-2,3,4,5-tetrahydrodipicolinate</name>
        <dbReference type="ChEBI" id="CHEBI:16845"/>
    </ligand>
</feature>
<keyword id="KW-0028">Amino-acid biosynthesis</keyword>
<keyword id="KW-0963">Cytoplasm</keyword>
<keyword id="KW-0220">Diaminopimelate biosynthesis</keyword>
<keyword id="KW-0457">Lysine biosynthesis</keyword>
<keyword id="KW-0520">NAD</keyword>
<keyword id="KW-0521">NADP</keyword>
<keyword id="KW-0560">Oxidoreductase</keyword>
<sequence>MKMTKKVLVAGFMGAMGQKAVNLVNNMSGFEVVAGLSPIAEDNPEQYHLPASAKIFKNLTEIPDNLADFWIDFTTPKAVYENVKFALQHHIRPVVGTTGMSDEQEAELIVLSKKEKVGGLIAPNFGMSAVLLMKFAKEAAKYFPDVEIIEMHHADKKDAPSGTALATAKMIAENRPEHQTAPDEVETLKNVRGGDYQGIKIHSVRLPCYIAHEQVLFGGPGEALTIRQDSFDRGSFMNGVKVALEKVDQLDELVIGLENIL</sequence>
<gene>
    <name evidence="1" type="primary">dapB</name>
    <name type="ordered locus">lhv_0909</name>
</gene>